<dbReference type="EC" id="4.2.2.2"/>
<dbReference type="EMBL" id="AL049751">
    <property type="protein sequence ID" value="CAB41931.1"/>
    <property type="status" value="ALT_SEQ"/>
    <property type="molecule type" value="Genomic_DNA"/>
</dbReference>
<dbReference type="EMBL" id="AL161535">
    <property type="protein sequence ID" value="CAB78363.1"/>
    <property type="status" value="ALT_SEQ"/>
    <property type="molecule type" value="Genomic_DNA"/>
</dbReference>
<dbReference type="EMBL" id="CP002687">
    <property type="protein sequence ID" value="AEE83246.1"/>
    <property type="molecule type" value="Genomic_DNA"/>
</dbReference>
<dbReference type="PIR" id="T07701">
    <property type="entry name" value="T07701"/>
</dbReference>
<dbReference type="RefSeq" id="NP_001190715.1">
    <molecule id="Q9SVQ6-1"/>
    <property type="nucleotide sequence ID" value="NM_001203786.1"/>
</dbReference>
<dbReference type="SMR" id="Q9SVQ6"/>
<dbReference type="FunCoup" id="Q9SVQ6">
    <property type="interactions" value="107"/>
</dbReference>
<dbReference type="STRING" id="3702.Q9SVQ6"/>
<dbReference type="CAZy" id="PL1">
    <property type="family name" value="Polysaccharide Lyase Family 1"/>
</dbReference>
<dbReference type="GlyGen" id="Q9SVQ6">
    <property type="glycosylation" value="3 sites"/>
</dbReference>
<dbReference type="iPTMnet" id="Q9SVQ6"/>
<dbReference type="PaxDb" id="3702-AT4G13210.2"/>
<dbReference type="ProteomicsDB" id="226279">
    <molecule id="Q9SVQ6-1"/>
</dbReference>
<dbReference type="EnsemblPlants" id="AT4G13210.2">
    <molecule id="Q9SVQ6-1"/>
    <property type="protein sequence ID" value="AT4G13210.2"/>
    <property type="gene ID" value="AT4G13210"/>
</dbReference>
<dbReference type="GeneID" id="826936"/>
<dbReference type="Gramene" id="AT4G13210.2">
    <molecule id="Q9SVQ6-1"/>
    <property type="protein sequence ID" value="AT4G13210.2"/>
    <property type="gene ID" value="AT4G13210"/>
</dbReference>
<dbReference type="KEGG" id="ath:AT4G13210"/>
<dbReference type="Araport" id="AT4G13210"/>
<dbReference type="TAIR" id="AT4G13210"/>
<dbReference type="eggNOG" id="ENOG502QQ5F">
    <property type="taxonomic scope" value="Eukaryota"/>
</dbReference>
<dbReference type="InParanoid" id="Q9SVQ6"/>
<dbReference type="OrthoDB" id="1637350at2759"/>
<dbReference type="BioCyc" id="ARA:AT4G13210-MONOMER"/>
<dbReference type="UniPathway" id="UPA00545">
    <property type="reaction ID" value="UER00824"/>
</dbReference>
<dbReference type="PRO" id="PR:Q9SVQ6"/>
<dbReference type="Proteomes" id="UP000006548">
    <property type="component" value="Chromosome 4"/>
</dbReference>
<dbReference type="ExpressionAtlas" id="Q9SVQ6">
    <property type="expression patterns" value="baseline and differential"/>
</dbReference>
<dbReference type="GO" id="GO:0046872">
    <property type="term" value="F:metal ion binding"/>
    <property type="evidence" value="ECO:0007669"/>
    <property type="project" value="UniProtKB-KW"/>
</dbReference>
<dbReference type="GO" id="GO:0030570">
    <property type="term" value="F:pectate lyase activity"/>
    <property type="evidence" value="ECO:0007669"/>
    <property type="project" value="UniProtKB-EC"/>
</dbReference>
<dbReference type="GO" id="GO:0045490">
    <property type="term" value="P:pectin catabolic process"/>
    <property type="evidence" value="ECO:0007669"/>
    <property type="project" value="UniProtKB-UniPathway"/>
</dbReference>
<dbReference type="FunFam" id="2.160.20.10:FF:000009">
    <property type="entry name" value="Pectate lyase"/>
    <property type="match status" value="1"/>
</dbReference>
<dbReference type="Gene3D" id="2.160.20.10">
    <property type="entry name" value="Single-stranded right-handed beta-helix, Pectin lyase-like"/>
    <property type="match status" value="1"/>
</dbReference>
<dbReference type="InterPro" id="IPR018082">
    <property type="entry name" value="AmbAllergen"/>
</dbReference>
<dbReference type="InterPro" id="IPR002022">
    <property type="entry name" value="Pec_lyase"/>
</dbReference>
<dbReference type="InterPro" id="IPR012334">
    <property type="entry name" value="Pectin_lyas_fold"/>
</dbReference>
<dbReference type="InterPro" id="IPR011050">
    <property type="entry name" value="Pectin_lyase_fold/virulence"/>
</dbReference>
<dbReference type="InterPro" id="IPR045032">
    <property type="entry name" value="PEL"/>
</dbReference>
<dbReference type="PANTHER" id="PTHR31683:SF96">
    <property type="entry name" value="PECTATE LYASE 14-RELATED"/>
    <property type="match status" value="1"/>
</dbReference>
<dbReference type="PANTHER" id="PTHR31683">
    <property type="entry name" value="PECTATE LYASE 18-RELATED"/>
    <property type="match status" value="1"/>
</dbReference>
<dbReference type="Pfam" id="PF00544">
    <property type="entry name" value="Pectate_lyase_4"/>
    <property type="match status" value="1"/>
</dbReference>
<dbReference type="PRINTS" id="PR00807">
    <property type="entry name" value="AMBALLERGEN"/>
</dbReference>
<dbReference type="SMART" id="SM00656">
    <property type="entry name" value="Amb_all"/>
    <property type="match status" value="1"/>
</dbReference>
<dbReference type="SUPFAM" id="SSF51126">
    <property type="entry name" value="Pectin lyase-like"/>
    <property type="match status" value="1"/>
</dbReference>
<name>PLY14_ARATH</name>
<proteinExistence type="inferred from homology"/>
<gene>
    <name type="ordered locus">At4g13210</name>
    <name type="ORF">F17N18.100</name>
</gene>
<evidence type="ECO:0000250" key="1"/>
<evidence type="ECO:0000255" key="2"/>
<evidence type="ECO:0000305" key="3"/>
<reference key="1">
    <citation type="journal article" date="1999" name="Nature">
        <title>Sequence and analysis of chromosome 4 of the plant Arabidopsis thaliana.</title>
        <authorList>
            <person name="Mayer K.F.X."/>
            <person name="Schueller C."/>
            <person name="Wambutt R."/>
            <person name="Murphy G."/>
            <person name="Volckaert G."/>
            <person name="Pohl T."/>
            <person name="Duesterhoeft A."/>
            <person name="Stiekema W."/>
            <person name="Entian K.-D."/>
            <person name="Terryn N."/>
            <person name="Harris B."/>
            <person name="Ansorge W."/>
            <person name="Brandt P."/>
            <person name="Grivell L.A."/>
            <person name="Rieger M."/>
            <person name="Weichselgartner M."/>
            <person name="de Simone V."/>
            <person name="Obermaier B."/>
            <person name="Mache R."/>
            <person name="Mueller M."/>
            <person name="Kreis M."/>
            <person name="Delseny M."/>
            <person name="Puigdomenech P."/>
            <person name="Watson M."/>
            <person name="Schmidtheini T."/>
            <person name="Reichert B."/>
            <person name="Portetelle D."/>
            <person name="Perez-Alonso M."/>
            <person name="Boutry M."/>
            <person name="Bancroft I."/>
            <person name="Vos P."/>
            <person name="Hoheisel J."/>
            <person name="Zimmermann W."/>
            <person name="Wedler H."/>
            <person name="Ridley P."/>
            <person name="Langham S.-A."/>
            <person name="McCullagh B."/>
            <person name="Bilham L."/>
            <person name="Robben J."/>
            <person name="van der Schueren J."/>
            <person name="Grymonprez B."/>
            <person name="Chuang Y.-J."/>
            <person name="Vandenbussche F."/>
            <person name="Braeken M."/>
            <person name="Weltjens I."/>
            <person name="Voet M."/>
            <person name="Bastiaens I."/>
            <person name="Aert R."/>
            <person name="Defoor E."/>
            <person name="Weitzenegger T."/>
            <person name="Bothe G."/>
            <person name="Ramsperger U."/>
            <person name="Hilbert H."/>
            <person name="Braun M."/>
            <person name="Holzer E."/>
            <person name="Brandt A."/>
            <person name="Peters S."/>
            <person name="van Staveren M."/>
            <person name="Dirkse W."/>
            <person name="Mooijman P."/>
            <person name="Klein Lankhorst R."/>
            <person name="Rose M."/>
            <person name="Hauf J."/>
            <person name="Koetter P."/>
            <person name="Berneiser S."/>
            <person name="Hempel S."/>
            <person name="Feldpausch M."/>
            <person name="Lamberth S."/>
            <person name="Van den Daele H."/>
            <person name="De Keyser A."/>
            <person name="Buysshaert C."/>
            <person name="Gielen J."/>
            <person name="Villarroel R."/>
            <person name="De Clercq R."/>
            <person name="van Montagu M."/>
            <person name="Rogers J."/>
            <person name="Cronin A."/>
            <person name="Quail M.A."/>
            <person name="Bray-Allen S."/>
            <person name="Clark L."/>
            <person name="Doggett J."/>
            <person name="Hall S."/>
            <person name="Kay M."/>
            <person name="Lennard N."/>
            <person name="McLay K."/>
            <person name="Mayes R."/>
            <person name="Pettett A."/>
            <person name="Rajandream M.A."/>
            <person name="Lyne M."/>
            <person name="Benes V."/>
            <person name="Rechmann S."/>
            <person name="Borkova D."/>
            <person name="Bloecker H."/>
            <person name="Scharfe M."/>
            <person name="Grimm M."/>
            <person name="Loehnert T.-H."/>
            <person name="Dose S."/>
            <person name="de Haan M."/>
            <person name="Maarse A.C."/>
            <person name="Schaefer M."/>
            <person name="Mueller-Auer S."/>
            <person name="Gabel C."/>
            <person name="Fuchs M."/>
            <person name="Fartmann B."/>
            <person name="Granderath K."/>
            <person name="Dauner D."/>
            <person name="Herzl A."/>
            <person name="Neumann S."/>
            <person name="Argiriou A."/>
            <person name="Vitale D."/>
            <person name="Liguori R."/>
            <person name="Piravandi E."/>
            <person name="Massenet O."/>
            <person name="Quigley F."/>
            <person name="Clabauld G."/>
            <person name="Muendlein A."/>
            <person name="Felber R."/>
            <person name="Schnabl S."/>
            <person name="Hiller R."/>
            <person name="Schmidt W."/>
            <person name="Lecharny A."/>
            <person name="Aubourg S."/>
            <person name="Chefdor F."/>
            <person name="Cooke R."/>
            <person name="Berger C."/>
            <person name="Monfort A."/>
            <person name="Casacuberta E."/>
            <person name="Gibbons T."/>
            <person name="Weber N."/>
            <person name="Vandenbol M."/>
            <person name="Bargues M."/>
            <person name="Terol J."/>
            <person name="Torres A."/>
            <person name="Perez-Perez A."/>
            <person name="Purnelle B."/>
            <person name="Bent E."/>
            <person name="Johnson S."/>
            <person name="Tacon D."/>
            <person name="Jesse T."/>
            <person name="Heijnen L."/>
            <person name="Schwarz S."/>
            <person name="Scholler P."/>
            <person name="Heber S."/>
            <person name="Francs P."/>
            <person name="Bielke C."/>
            <person name="Frishman D."/>
            <person name="Haase D."/>
            <person name="Lemcke K."/>
            <person name="Mewes H.-W."/>
            <person name="Stocker S."/>
            <person name="Zaccaria P."/>
            <person name="Bevan M."/>
            <person name="Wilson R.K."/>
            <person name="de la Bastide M."/>
            <person name="Habermann K."/>
            <person name="Parnell L."/>
            <person name="Dedhia N."/>
            <person name="Gnoj L."/>
            <person name="Schutz K."/>
            <person name="Huang E."/>
            <person name="Spiegel L."/>
            <person name="Sekhon M."/>
            <person name="Murray J."/>
            <person name="Sheet P."/>
            <person name="Cordes M."/>
            <person name="Abu-Threideh J."/>
            <person name="Stoneking T."/>
            <person name="Kalicki J."/>
            <person name="Graves T."/>
            <person name="Harmon G."/>
            <person name="Edwards J."/>
            <person name="Latreille P."/>
            <person name="Courtney L."/>
            <person name="Cloud J."/>
            <person name="Abbott A."/>
            <person name="Scott K."/>
            <person name="Johnson D."/>
            <person name="Minx P."/>
            <person name="Bentley D."/>
            <person name="Fulton B."/>
            <person name="Miller N."/>
            <person name="Greco T."/>
            <person name="Kemp K."/>
            <person name="Kramer J."/>
            <person name="Fulton L."/>
            <person name="Mardis E."/>
            <person name="Dante M."/>
            <person name="Pepin K."/>
            <person name="Hillier L.W."/>
            <person name="Nelson J."/>
            <person name="Spieth J."/>
            <person name="Ryan E."/>
            <person name="Andrews S."/>
            <person name="Geisel C."/>
            <person name="Layman D."/>
            <person name="Du H."/>
            <person name="Ali J."/>
            <person name="Berghoff A."/>
            <person name="Jones K."/>
            <person name="Drone K."/>
            <person name="Cotton M."/>
            <person name="Joshu C."/>
            <person name="Antonoiu B."/>
            <person name="Zidanic M."/>
            <person name="Strong C."/>
            <person name="Sun H."/>
            <person name="Lamar B."/>
            <person name="Yordan C."/>
            <person name="Ma P."/>
            <person name="Zhong J."/>
            <person name="Preston R."/>
            <person name="Vil D."/>
            <person name="Shekher M."/>
            <person name="Matero A."/>
            <person name="Shah R."/>
            <person name="Swaby I.K."/>
            <person name="O'Shaughnessy A."/>
            <person name="Rodriguez M."/>
            <person name="Hoffman J."/>
            <person name="Till S."/>
            <person name="Granat S."/>
            <person name="Shohdy N."/>
            <person name="Hasegawa A."/>
            <person name="Hameed A."/>
            <person name="Lodhi M."/>
            <person name="Johnson A."/>
            <person name="Chen E."/>
            <person name="Marra M.A."/>
            <person name="Martienssen R."/>
            <person name="McCombie W.R."/>
        </authorList>
    </citation>
    <scope>NUCLEOTIDE SEQUENCE [LARGE SCALE GENOMIC DNA]</scope>
    <source>
        <strain>cv. Columbia</strain>
    </source>
</reference>
<reference key="2">
    <citation type="journal article" date="2017" name="Plant J.">
        <title>Araport11: a complete reannotation of the Arabidopsis thaliana reference genome.</title>
        <authorList>
            <person name="Cheng C.Y."/>
            <person name="Krishnakumar V."/>
            <person name="Chan A.P."/>
            <person name="Thibaud-Nissen F."/>
            <person name="Schobel S."/>
            <person name="Town C.D."/>
        </authorList>
    </citation>
    <scope>GENOME REANNOTATION</scope>
    <source>
        <strain>cv. Columbia</strain>
    </source>
</reference>
<feature type="signal peptide" evidence="2">
    <location>
        <begin position="1"/>
        <end position="26"/>
    </location>
</feature>
<feature type="chain" id="PRO_0000024879" description="Putative pectate lyase 14">
    <location>
        <begin position="27"/>
        <end position="438"/>
    </location>
</feature>
<feature type="active site" evidence="2">
    <location>
        <position position="316"/>
    </location>
</feature>
<feature type="binding site" evidence="1">
    <location>
        <position position="236"/>
    </location>
    <ligand>
        <name>Ca(2+)</name>
        <dbReference type="ChEBI" id="CHEBI:29108"/>
    </ligand>
</feature>
<feature type="binding site" evidence="1">
    <location>
        <position position="260"/>
    </location>
    <ligand>
        <name>Ca(2+)</name>
        <dbReference type="ChEBI" id="CHEBI:29108"/>
    </ligand>
</feature>
<feature type="binding site" evidence="1">
    <location>
        <position position="264"/>
    </location>
    <ligand>
        <name>Ca(2+)</name>
        <dbReference type="ChEBI" id="CHEBI:29108"/>
    </ligand>
</feature>
<feature type="glycosylation site" description="N-linked (GlcNAc...) asparagine" evidence="2">
    <location>
        <position position="40"/>
    </location>
</feature>
<feature type="glycosylation site" description="N-linked (GlcNAc...) asparagine" evidence="2">
    <location>
        <position position="46"/>
    </location>
</feature>
<feature type="glycosylation site" description="N-linked (GlcNAc...) asparagine" evidence="2">
    <location>
        <position position="73"/>
    </location>
</feature>
<comment type="catalytic activity">
    <reaction>
        <text>Eliminative cleavage of (1-&gt;4)-alpha-D-galacturonan to give oligosaccharides with 4-deoxy-alpha-D-galact-4-enuronosyl groups at their non-reducing ends.</text>
        <dbReference type="EC" id="4.2.2.2"/>
    </reaction>
</comment>
<comment type="cofactor">
    <cofactor evidence="1">
        <name>Ca(2+)</name>
        <dbReference type="ChEBI" id="CHEBI:29108"/>
    </cofactor>
    <text evidence="1">Binds 1 Ca(2+) ion. Required for its activity.</text>
</comment>
<comment type="pathway">
    <text>Glycan metabolism; pectin degradation; 2-dehydro-3-deoxy-D-gluconate from pectin: step 2/5.</text>
</comment>
<comment type="alternative products">
    <event type="alternative splicing"/>
    <isoform>
        <id>Q9SVQ6-1</id>
        <name>1</name>
        <sequence type="displayed"/>
    </isoform>
    <text>A number of isoforms are produced. According to EST sequences.</text>
</comment>
<comment type="similarity">
    <text evidence="3">Belongs to the polysaccharide lyase 1 family.</text>
</comment>
<comment type="sequence caution" evidence="3">
    <conflict type="erroneous gene model prediction">
        <sequence resource="EMBL-CDS" id="CAB41931"/>
    </conflict>
</comment>
<comment type="sequence caution" evidence="3">
    <conflict type="erroneous gene model prediction">
        <sequence resource="EMBL-CDS" id="CAB78363"/>
    </conflict>
</comment>
<keyword id="KW-0025">Alternative splicing</keyword>
<keyword id="KW-0106">Calcium</keyword>
<keyword id="KW-0325">Glycoprotein</keyword>
<keyword id="KW-0456">Lyase</keyword>
<keyword id="KW-0479">Metal-binding</keyword>
<keyword id="KW-1185">Reference proteome</keyword>
<keyword id="KW-0732">Signal</keyword>
<accession>Q9SVQ6</accession>
<accession>F4JSA0</accession>
<protein>
    <recommendedName>
        <fullName>Putative pectate lyase 14</fullName>
        <ecNumber>4.2.2.2</ecNumber>
    </recommendedName>
</protein>
<organism>
    <name type="scientific">Arabidopsis thaliana</name>
    <name type="common">Mouse-ear cress</name>
    <dbReference type="NCBI Taxonomy" id="3702"/>
    <lineage>
        <taxon>Eukaryota</taxon>
        <taxon>Viridiplantae</taxon>
        <taxon>Streptophyta</taxon>
        <taxon>Embryophyta</taxon>
        <taxon>Tracheophyta</taxon>
        <taxon>Spermatophyta</taxon>
        <taxon>Magnoliopsida</taxon>
        <taxon>eudicotyledons</taxon>
        <taxon>Gunneridae</taxon>
        <taxon>Pentapetalae</taxon>
        <taxon>rosids</taxon>
        <taxon>malvids</taxon>
        <taxon>Brassicales</taxon>
        <taxon>Brassicaceae</taxon>
        <taxon>Camelineae</taxon>
        <taxon>Arabidopsis</taxon>
    </lineage>
</organism>
<sequence length="438" mass="48548">MVVARTLFSISATLIIFLALFLHVNAVQETREPKHESSRNTSTVDNLSDGEWHEHAVKDPEEIAAMVDMSIRNSTYRRKLGFFSSCSTGNPIDDCWRCDKKWHRRRKRLADCAIGFGRNAVGGRDGRYYIVTDPSDHDPVTPKPGTLRYAVIQDEPLWIVFKRDMVITLSQELIMNSFKTIDGRGVNVHIAGGACLTVQYVTNIIIHGINIHDCKRTGNAMVRSSESHYGWRTMADGDGISIFGSSHIWIDHNSLSSCADGLIDAIMGSTAITISNNYLTHHNEAILLGHTDSYTRDKMMQVTIAYNHFGEGLIQRMPRCRHGYFHVVNNDYTHWEMYAIGGSANPTINSQGNRFLAPGNRFAKEVTKRVGAGKGEWNNWNWRSQGDLMLNGAYFTSSGAGASANYARASSLAAKSSSLVGMLTSSSGALKCRIGTLC</sequence>